<sequence>MHRRGVGAGAIAKKKLAEAKYKERGTVLAEDQLAQMSKQLDMFKTNLEEFASKHKQEIRKNPEFRVQFQDMCATIGVDPLASGKGFWSEMLGVGDFYYELGVQIIEVCLALKHRNGGLITLEELHQQVLKGRGKFAQDVSQDDLIRAIKKLKALGTGFGIIPVGGTYLIQSVPAELNMDHTVVLQLAEKNGYVTVSEIKASLKWETERARQVLEHLLKEGLAWLDLQAPGEAHYWLPALFTDLYSQEISAEEAKEVFP</sequence>
<name>SNF8_RAT</name>
<keyword id="KW-0175">Coiled coil</keyword>
<keyword id="KW-0963">Cytoplasm</keyword>
<keyword id="KW-0903">Direct protein sequencing</keyword>
<keyword id="KW-0967">Endosome</keyword>
<keyword id="KW-0472">Membrane</keyword>
<keyword id="KW-0488">Methylation</keyword>
<keyword id="KW-0539">Nucleus</keyword>
<keyword id="KW-0653">Protein transport</keyword>
<keyword id="KW-1185">Reference proteome</keyword>
<keyword id="KW-0804">Transcription</keyword>
<keyword id="KW-0805">Transcription regulation</keyword>
<keyword id="KW-0813">Transport</keyword>
<feature type="chain" id="PRO_0000215211" description="Vacuolar-sorting protein SNF8">
    <location>
        <begin position="1"/>
        <end position="258"/>
    </location>
</feature>
<feature type="coiled-coil region" evidence="4">
    <location>
        <begin position="27"/>
        <end position="53"/>
    </location>
</feature>
<feature type="modified residue" description="Omega-N-methylarginine" evidence="3">
    <location>
        <position position="4"/>
    </location>
</feature>
<organism>
    <name type="scientific">Rattus norvegicus</name>
    <name type="common">Rat</name>
    <dbReference type="NCBI Taxonomy" id="10116"/>
    <lineage>
        <taxon>Eukaryota</taxon>
        <taxon>Metazoa</taxon>
        <taxon>Chordata</taxon>
        <taxon>Craniata</taxon>
        <taxon>Vertebrata</taxon>
        <taxon>Euteleostomi</taxon>
        <taxon>Mammalia</taxon>
        <taxon>Eutheria</taxon>
        <taxon>Euarchontoglires</taxon>
        <taxon>Glires</taxon>
        <taxon>Rodentia</taxon>
        <taxon>Myomorpha</taxon>
        <taxon>Muroidea</taxon>
        <taxon>Muridae</taxon>
        <taxon>Murinae</taxon>
        <taxon>Rattus</taxon>
    </lineage>
</organism>
<reference key="1">
    <citation type="journal article" date="2004" name="Genome Res.">
        <title>The status, quality, and expansion of the NIH full-length cDNA project: the Mammalian Gene Collection (MGC).</title>
        <authorList>
            <consortium name="The MGC Project Team"/>
        </authorList>
    </citation>
    <scope>NUCLEOTIDE SEQUENCE [LARGE SCALE MRNA]</scope>
    <source>
        <tissue>Ovary</tissue>
    </source>
</reference>
<reference key="2">
    <citation type="journal article" date="1999" name="J. Biol. Chem.">
        <title>Cloning and characterization of the EAP30 subunit of the ELL complex that confers derepression of transcription by RNA polymerase II.</title>
        <authorList>
            <person name="Schmidt A.E."/>
            <person name="Miller T."/>
            <person name="Schmidt S.L."/>
            <person name="Shiekhattar R."/>
            <person name="Shilatifard A."/>
        </authorList>
    </citation>
    <scope>PROTEIN SEQUENCE OF 37-53; 135-146 AND 211-218</scope>
    <scope>FUNCTION IN TRANSCRIPTION</scope>
    <source>
        <tissue>Liver</tissue>
    </source>
</reference>
<reference key="3">
    <citation type="journal article" date="2001" name="J. Biol. Chem.">
        <title>Cloning and characterization of ELL-associated proteins EAP45 and EAP20. a role for yeast EAP-like proteins in regulation of gene expression by glucose.</title>
        <authorList>
            <person name="Kamura T."/>
            <person name="Burian D."/>
            <person name="Khalili H."/>
            <person name="Schmidt S.L."/>
            <person name="Sato S."/>
            <person name="Liu W.-J."/>
            <person name="Conrad M.N."/>
            <person name="Conaway R.C."/>
            <person name="Conaway J.W."/>
            <person name="Shilatifard A."/>
        </authorList>
    </citation>
    <scope>IDENTIFICATION IN A COMPLEX WITH ELL; VPS25 AND VPS36</scope>
</reference>
<protein>
    <recommendedName>
        <fullName>Vacuolar-sorting protein SNF8</fullName>
    </recommendedName>
    <alternativeName>
        <fullName>ELL-associated protein of 30 kDa</fullName>
    </alternativeName>
    <alternativeName>
        <fullName>ESCRT-II complex subunit VPS22</fullName>
    </alternativeName>
</protein>
<evidence type="ECO:0000250" key="1"/>
<evidence type="ECO:0000250" key="2">
    <source>
        <dbReference type="UniProtKB" id="Q5U3V9"/>
    </source>
</evidence>
<evidence type="ECO:0000250" key="3">
    <source>
        <dbReference type="UniProtKB" id="Q96H20"/>
    </source>
</evidence>
<evidence type="ECO:0000255" key="4"/>
<evidence type="ECO:0000269" key="5">
    <source>
    </source>
</evidence>
<evidence type="ECO:0000269" key="6">
    <source>
    </source>
</evidence>
<evidence type="ECO:0000305" key="7"/>
<gene>
    <name type="primary">Snf8</name>
    <name type="synonym">Eap30</name>
</gene>
<comment type="function">
    <text evidence="2 3 5">Required for degradation of both endocytosed EGF and EGFR, but not for the EGFR ligand-mediated internalization (By similarity). Component of the endosomal sorting complex required for transport II (ESCRT-II), which is required for multivesicular body (MVB) formation and sorting of endosomal cargo proteins into MVBs, and plays a role in autophagy. The MVB pathway mediates delivery of transmembrane proteins into the lumen of the lysosome for degradation. The ESCRT-II complex is probably involved in the recruitment of the ESCRT-III complex. The ESCRT-II complex may also play a role in transcription regulation by participating in derepression of transcription by RNA polymerase II, possibly via its interaction with ELL. Required for the exosomal release of SDCBP, CD63 and syndecan (By similarity).</text>
</comment>
<comment type="subunit">
    <text evidence="3 6">Interacts with TSG101 (via the C-terminal domain). Interacts with RILPL1 (via the N-terminal domain); which recruits ESCRT-II to the endosome membranes. Interacts with 14-3-3 proteins (By similarity). Component of the endosomal sorting complex required for transport II (ESCRT-II), composed of SNF8, VPS25 and VPS36 (PubMed:11278625). SNF8 is essential for the stability of the ESCRT-II complex. ESCRT-II interacts with ELL (By similarity).</text>
</comment>
<comment type="subcellular location">
    <subcellularLocation>
        <location evidence="1">Cytoplasm</location>
    </subcellularLocation>
    <subcellularLocation>
        <location evidence="1">Endosome membrane</location>
    </subcellularLocation>
    <subcellularLocation>
        <location evidence="7">Nucleus</location>
    </subcellularLocation>
    <subcellularLocation>
        <location evidence="1">Late endosome membrane</location>
    </subcellularLocation>
    <text evidence="1">Recruited to the endosome membrane to participate in vesicle formation.</text>
</comment>
<comment type="similarity">
    <text evidence="7">Belongs to the SNF8 family.</text>
</comment>
<accession>Q5RK19</accession>
<proteinExistence type="evidence at protein level"/>
<dbReference type="EMBL" id="BC086364">
    <property type="protein sequence ID" value="AAH86364.1"/>
    <property type="molecule type" value="mRNA"/>
</dbReference>
<dbReference type="RefSeq" id="NP_001007805.1">
    <property type="nucleotide sequence ID" value="NM_001007804.2"/>
</dbReference>
<dbReference type="SMR" id="Q5RK19"/>
<dbReference type="FunCoup" id="Q5RK19">
    <property type="interactions" value="2725"/>
</dbReference>
<dbReference type="STRING" id="10116.ENSRNOP00000008964"/>
<dbReference type="PhosphoSitePlus" id="Q5RK19"/>
<dbReference type="jPOST" id="Q5RK19"/>
<dbReference type="PaxDb" id="10116-ENSRNOP00000008964"/>
<dbReference type="Ensembl" id="ENSRNOT00000008964.5">
    <property type="protein sequence ID" value="ENSRNOP00000008964.2"/>
    <property type="gene ID" value="ENSRNOG00000006500.7"/>
</dbReference>
<dbReference type="GeneID" id="287645"/>
<dbReference type="KEGG" id="rno:287645"/>
<dbReference type="UCSC" id="RGD:1310144">
    <property type="organism name" value="rat"/>
</dbReference>
<dbReference type="AGR" id="RGD:1310144"/>
<dbReference type="CTD" id="11267"/>
<dbReference type="RGD" id="1310144">
    <property type="gene designation" value="Snf8"/>
</dbReference>
<dbReference type="eggNOG" id="KOG3341">
    <property type="taxonomic scope" value="Eukaryota"/>
</dbReference>
<dbReference type="GeneTree" id="ENSGT00390000007843"/>
<dbReference type="HOGENOM" id="CLU_070147_2_0_1"/>
<dbReference type="InParanoid" id="Q5RK19"/>
<dbReference type="OMA" id="QIVEVCM"/>
<dbReference type="OrthoDB" id="28770at9989"/>
<dbReference type="PhylomeDB" id="Q5RK19"/>
<dbReference type="TreeFam" id="TF105950"/>
<dbReference type="Reactome" id="R-RNO-917729">
    <property type="pathway name" value="Endosomal Sorting Complex Required For Transport (ESCRT)"/>
</dbReference>
<dbReference type="PRO" id="PR:Q5RK19"/>
<dbReference type="Proteomes" id="UP000002494">
    <property type="component" value="Chromosome 10"/>
</dbReference>
<dbReference type="Bgee" id="ENSRNOG00000006500">
    <property type="expression patterns" value="Expressed in skeletal muscle tissue and 20 other cell types or tissues"/>
</dbReference>
<dbReference type="GO" id="GO:0005737">
    <property type="term" value="C:cytoplasm"/>
    <property type="evidence" value="ECO:0000266"/>
    <property type="project" value="RGD"/>
</dbReference>
<dbReference type="GO" id="GO:0005829">
    <property type="term" value="C:cytosol"/>
    <property type="evidence" value="ECO:0000266"/>
    <property type="project" value="RGD"/>
</dbReference>
<dbReference type="GO" id="GO:0010008">
    <property type="term" value="C:endosome membrane"/>
    <property type="evidence" value="ECO:0000266"/>
    <property type="project" value="RGD"/>
</dbReference>
<dbReference type="GO" id="GO:0000814">
    <property type="term" value="C:ESCRT II complex"/>
    <property type="evidence" value="ECO:0000266"/>
    <property type="project" value="RGD"/>
</dbReference>
<dbReference type="GO" id="GO:0031902">
    <property type="term" value="C:late endosome membrane"/>
    <property type="evidence" value="ECO:0000266"/>
    <property type="project" value="RGD"/>
</dbReference>
<dbReference type="GO" id="GO:0016020">
    <property type="term" value="C:membrane"/>
    <property type="evidence" value="ECO:0000266"/>
    <property type="project" value="RGD"/>
</dbReference>
<dbReference type="GO" id="GO:0005654">
    <property type="term" value="C:nucleoplasm"/>
    <property type="evidence" value="ECO:0007669"/>
    <property type="project" value="Ensembl"/>
</dbReference>
<dbReference type="GO" id="GO:0005634">
    <property type="term" value="C:nucleus"/>
    <property type="evidence" value="ECO:0000266"/>
    <property type="project" value="RGD"/>
</dbReference>
<dbReference type="GO" id="GO:0048471">
    <property type="term" value="C:perinuclear region of cytoplasm"/>
    <property type="evidence" value="ECO:0000266"/>
    <property type="project" value="RGD"/>
</dbReference>
<dbReference type="GO" id="GO:0005886">
    <property type="term" value="C:plasma membrane"/>
    <property type="evidence" value="ECO:0000266"/>
    <property type="project" value="RGD"/>
</dbReference>
<dbReference type="GO" id="GO:0055037">
    <property type="term" value="C:recycling endosome"/>
    <property type="evidence" value="ECO:0000266"/>
    <property type="project" value="RGD"/>
</dbReference>
<dbReference type="GO" id="GO:0005667">
    <property type="term" value="C:transcription regulator complex"/>
    <property type="evidence" value="ECO:0000266"/>
    <property type="project" value="RGD"/>
</dbReference>
<dbReference type="GO" id="GO:0016247">
    <property type="term" value="F:channel regulator activity"/>
    <property type="evidence" value="ECO:0000266"/>
    <property type="project" value="RGD"/>
</dbReference>
<dbReference type="GO" id="GO:0008289">
    <property type="term" value="F:lipid binding"/>
    <property type="evidence" value="ECO:0000266"/>
    <property type="project" value="RGD"/>
</dbReference>
<dbReference type="GO" id="GO:0042803">
    <property type="term" value="F:protein homodimerization activity"/>
    <property type="evidence" value="ECO:0000266"/>
    <property type="project" value="RGD"/>
</dbReference>
<dbReference type="GO" id="GO:0045022">
    <property type="term" value="P:early endosome to late endosome transport"/>
    <property type="evidence" value="ECO:0000266"/>
    <property type="project" value="RGD"/>
</dbReference>
<dbReference type="GO" id="GO:0032456">
    <property type="term" value="P:endocytic recycling"/>
    <property type="evidence" value="ECO:0000266"/>
    <property type="project" value="RGD"/>
</dbReference>
<dbReference type="GO" id="GO:0016236">
    <property type="term" value="P:macroautophagy"/>
    <property type="evidence" value="ECO:0000250"/>
    <property type="project" value="UniProtKB"/>
</dbReference>
<dbReference type="GO" id="GO:0036258">
    <property type="term" value="P:multivesicular body assembly"/>
    <property type="evidence" value="ECO:0000250"/>
    <property type="project" value="UniProtKB"/>
</dbReference>
<dbReference type="GO" id="GO:0071985">
    <property type="term" value="P:multivesicular body sorting pathway"/>
    <property type="evidence" value="ECO:0000250"/>
    <property type="project" value="UniProtKB"/>
</dbReference>
<dbReference type="GO" id="GO:1903543">
    <property type="term" value="P:positive regulation of exosomal secretion"/>
    <property type="evidence" value="ECO:0000266"/>
    <property type="project" value="RGD"/>
</dbReference>
<dbReference type="GO" id="GO:0010628">
    <property type="term" value="P:positive regulation of gene expression"/>
    <property type="evidence" value="ECO:0000266"/>
    <property type="project" value="RGD"/>
</dbReference>
<dbReference type="GO" id="GO:0045732">
    <property type="term" value="P:positive regulation of protein catabolic process"/>
    <property type="evidence" value="ECO:0000266"/>
    <property type="project" value="RGD"/>
</dbReference>
<dbReference type="GO" id="GO:0043328">
    <property type="term" value="P:protein transport to vacuole involved in ubiquitin-dependent protein catabolic process via the multivesicular body sorting pathway"/>
    <property type="evidence" value="ECO:0000318"/>
    <property type="project" value="GO_Central"/>
</dbReference>
<dbReference type="GO" id="GO:0042176">
    <property type="term" value="P:regulation of protein catabolic process"/>
    <property type="evidence" value="ECO:0000266"/>
    <property type="project" value="RGD"/>
</dbReference>
<dbReference type="GO" id="GO:0061635">
    <property type="term" value="P:regulation of protein complex stability"/>
    <property type="evidence" value="ECO:0000266"/>
    <property type="project" value="RGD"/>
</dbReference>
<dbReference type="GO" id="GO:0006357">
    <property type="term" value="P:regulation of transcription by RNA polymerase II"/>
    <property type="evidence" value="ECO:0000266"/>
    <property type="project" value="RGD"/>
</dbReference>
<dbReference type="FunFam" id="1.10.10.10:FF:000085">
    <property type="entry name" value="Vacuolar-sorting protein SNF8"/>
    <property type="match status" value="1"/>
</dbReference>
<dbReference type="FunFam" id="1.10.10.10:FF:000234">
    <property type="entry name" value="Vacuolar-sorting protein SNF8"/>
    <property type="match status" value="1"/>
</dbReference>
<dbReference type="Gene3D" id="6.10.140.180">
    <property type="match status" value="1"/>
</dbReference>
<dbReference type="Gene3D" id="1.10.10.10">
    <property type="entry name" value="Winged helix-like DNA-binding domain superfamily/Winged helix DNA-binding domain"/>
    <property type="match status" value="2"/>
</dbReference>
<dbReference type="InterPro" id="IPR016689">
    <property type="entry name" value="ESCRT-2_cplx_Snf8"/>
</dbReference>
<dbReference type="InterPro" id="IPR040608">
    <property type="entry name" value="Snf8/Vps36"/>
</dbReference>
<dbReference type="InterPro" id="IPR036388">
    <property type="entry name" value="WH-like_DNA-bd_sf"/>
</dbReference>
<dbReference type="InterPro" id="IPR036390">
    <property type="entry name" value="WH_DNA-bd_sf"/>
</dbReference>
<dbReference type="PANTHER" id="PTHR12806">
    <property type="entry name" value="EAP30 SUBUNIT OF ELL COMPLEX"/>
    <property type="match status" value="1"/>
</dbReference>
<dbReference type="PANTHER" id="PTHR12806:SF0">
    <property type="entry name" value="VACUOLAR-SORTING PROTEIN SNF8"/>
    <property type="match status" value="1"/>
</dbReference>
<dbReference type="Pfam" id="PF04157">
    <property type="entry name" value="EAP30"/>
    <property type="match status" value="1"/>
</dbReference>
<dbReference type="PIRSF" id="PIRSF017215">
    <property type="entry name" value="ESCRT2_Vps22"/>
    <property type="match status" value="1"/>
</dbReference>
<dbReference type="SUPFAM" id="SSF46785">
    <property type="entry name" value="Winged helix' DNA-binding domain"/>
    <property type="match status" value="2"/>
</dbReference>